<reference key="1">
    <citation type="submission" date="1997-01" db="EMBL/GenBank/DDBJ databases">
        <title>Sequence of minutes 4-25 of Escherichia coli.</title>
        <authorList>
            <person name="Chung E."/>
            <person name="Allen E."/>
            <person name="Araujo R."/>
            <person name="Aparicio A.M."/>
            <person name="Davis K."/>
            <person name="Duncan M."/>
            <person name="Federspiel N."/>
            <person name="Hyman R."/>
            <person name="Kalman S."/>
            <person name="Komp C."/>
            <person name="Kurdi O."/>
            <person name="Lew H."/>
            <person name="Lin D."/>
            <person name="Namath A."/>
            <person name="Oefner P."/>
            <person name="Roberts D."/>
            <person name="Schramm S."/>
            <person name="Davis R.W."/>
        </authorList>
    </citation>
    <scope>NUCLEOTIDE SEQUENCE [LARGE SCALE GENOMIC DNA]</scope>
    <source>
        <strain>K12 / MG1655 / ATCC 47076</strain>
    </source>
</reference>
<reference key="2">
    <citation type="journal article" date="1997" name="Science">
        <title>The complete genome sequence of Escherichia coli K-12.</title>
        <authorList>
            <person name="Blattner F.R."/>
            <person name="Plunkett G. III"/>
            <person name="Bloch C.A."/>
            <person name="Perna N.T."/>
            <person name="Burland V."/>
            <person name="Riley M."/>
            <person name="Collado-Vides J."/>
            <person name="Glasner J.D."/>
            <person name="Rode C.K."/>
            <person name="Mayhew G.F."/>
            <person name="Gregor J."/>
            <person name="Davis N.W."/>
            <person name="Kirkpatrick H.A."/>
            <person name="Goeden M.A."/>
            <person name="Rose D.J."/>
            <person name="Mau B."/>
            <person name="Shao Y."/>
        </authorList>
    </citation>
    <scope>NUCLEOTIDE SEQUENCE [LARGE SCALE GENOMIC DNA]</scope>
    <source>
        <strain>K12 / MG1655 / ATCC 47076</strain>
    </source>
</reference>
<reference key="3">
    <citation type="journal article" date="2006" name="Mol. Syst. Biol.">
        <title>Highly accurate genome sequences of Escherichia coli K-12 strains MG1655 and W3110.</title>
        <authorList>
            <person name="Hayashi K."/>
            <person name="Morooka N."/>
            <person name="Yamamoto Y."/>
            <person name="Fujita K."/>
            <person name="Isono K."/>
            <person name="Choi S."/>
            <person name="Ohtsubo E."/>
            <person name="Baba T."/>
            <person name="Wanner B.L."/>
            <person name="Mori H."/>
            <person name="Horiuchi T."/>
        </authorList>
    </citation>
    <scope>NUCLEOTIDE SEQUENCE [LARGE SCALE GENOMIC DNA]</scope>
    <source>
        <strain>K12 / W3110 / ATCC 27325 / DSM 5911</strain>
    </source>
</reference>
<reference key="4">
    <citation type="journal article" date="2009" name="FEBS J.">
        <title>A periplasmic aldehyde oxidoreductase represents the first molybdopterin cytosine dinucleotide cofactor containing molybdo-flavoenzyme from Escherichia coli.</title>
        <authorList>
            <person name="Neumann M."/>
            <person name="Mittelstaedt G."/>
            <person name="Iobbi-Nivol C."/>
            <person name="Saggu M."/>
            <person name="Lendzian F."/>
            <person name="Hildebrandt P."/>
            <person name="Leimkuehler S."/>
        </authorList>
    </citation>
    <scope>FUNCTION</scope>
    <scope>CATALYTIC ACTIVITY</scope>
    <scope>COFACTOR</scope>
    <scope>ACTIVITY REGULATION</scope>
    <scope>SUBUNIT</scope>
    <scope>SUBCELLULAR LOCATION</scope>
</reference>
<reference key="5">
    <citation type="journal article" date="2011" name="J. Biol. Chem.">
        <title>Molybdopterin dinucleotide biosynthesis in Escherichia coli: identification of amino acid residues of molybdopterin dinucleotide transferases that determine specificity for binding of guanine or cytosine nucleotides.</title>
        <authorList>
            <person name="Neumann M."/>
            <person name="Seduk F."/>
            <person name="Iobbi-Nivol C."/>
            <person name="Leimkuhler S."/>
        </authorList>
    </citation>
    <scope>CATALYTIC ACTIVITY</scope>
    <scope>NOMENCLATURE</scope>
</reference>
<reference key="6">
    <citation type="journal article" date="2014" name="Int. J. Mol. Sci.">
        <title>Structural data on the periplasmic aldehyde oxidoreductase PaoABC from Escherichia coli: SAXS and preliminary X-ray crystallography analysis.</title>
        <authorList>
            <person name="Otrelo-Cardoso A.R."/>
            <person name="da Silva Correia M.A."/>
            <person name="Schwuchow V."/>
            <person name="Svergun D.I."/>
            <person name="Romao M.J."/>
            <person name="Leimkuehler S."/>
            <person name="Santos-Silva T."/>
        </authorList>
    </citation>
    <scope>CRYSTALLIZATION</scope>
    <scope>SUBUNIT</scope>
</reference>
<reference evidence="9 10" key="7">
    <citation type="journal article" date="2016" name="ACS Chem. Biol.">
        <title>The Escherichia coli periplasmic aldehyde oxidoreductase is an exceptional member of the xanthine oxidase family of molybdoenzymes.</title>
        <authorList>
            <person name="Correia M.A."/>
            <person name="Otrelo-Cardoso A.R."/>
            <person name="Schwuchow V."/>
            <person name="Sigfridsson Clauss K.G."/>
            <person name="Haumann M."/>
            <person name="Romao M.J."/>
            <person name="Leimkuhler S."/>
            <person name="Santos-Silva T."/>
        </authorList>
    </citation>
    <scope>X-RAY CRYSTALLOGRAPHY (1.70 ANGSTROMS) IN COMPLEX WITH FAD AND IRON-SULFUR (4FE-4S)</scope>
    <scope>COFACTOR</scope>
    <scope>SUBUNIT</scope>
</reference>
<sequence length="318" mass="33858">MKAFTYERVNTPAEAALSAQRVPGAKFIAGGTNLLDLMKLEIETPTHLIDVNGLGLDKIEVTDAGGLRIGALVRNTDLAAHERVRRDYAVLSRALLAGASGQLRNQATTAGNLLQRTRCPYFYDTNQPCNKRLPGSGCAALEGFSRQHAVVGVSEACIATHPSDMAVAMRLLDAVVETITPEGKTRSITLADFYHPPGKTPHIETALLPGELIVAVTLPPPLGGKHIYRKVRDRASYAFALVSVAAIIQPDGSGRVALGGVAHKPWRIEAADAQLSQGAQAVYDTLFASAHPTAENTFKLLLAKRTLASVLAEARAQA</sequence>
<keyword id="KW-0002">3D-structure</keyword>
<keyword id="KW-0004">4Fe-4S</keyword>
<keyword id="KW-0274">FAD</keyword>
<keyword id="KW-0285">Flavoprotein</keyword>
<keyword id="KW-0408">Iron</keyword>
<keyword id="KW-0411">Iron-sulfur</keyword>
<keyword id="KW-0479">Metal-binding</keyword>
<keyword id="KW-0560">Oxidoreductase</keyword>
<keyword id="KW-0574">Periplasm</keyword>
<keyword id="KW-1185">Reference proteome</keyword>
<proteinExistence type="evidence at protein level"/>
<protein>
    <recommendedName>
        <fullName evidence="7">Aldehyde oxidoreductase FAD-binding subunit PaoB</fullName>
        <ecNumber evidence="2 3">1.2.99.6</ecNumber>
    </recommendedName>
</protein>
<dbReference type="EC" id="1.2.99.6" evidence="2 3"/>
<dbReference type="EMBL" id="U73857">
    <property type="protein sequence ID" value="AAB18014.1"/>
    <property type="molecule type" value="Genomic_DNA"/>
</dbReference>
<dbReference type="EMBL" id="U00096">
    <property type="protein sequence ID" value="AAC73388.1"/>
    <property type="molecule type" value="Genomic_DNA"/>
</dbReference>
<dbReference type="EMBL" id="AP009048">
    <property type="protein sequence ID" value="BAE76069.1"/>
    <property type="molecule type" value="Genomic_DNA"/>
</dbReference>
<dbReference type="PIR" id="E64754">
    <property type="entry name" value="E64754"/>
</dbReference>
<dbReference type="RefSeq" id="NP_414819.1">
    <property type="nucleotide sequence ID" value="NC_000913.3"/>
</dbReference>
<dbReference type="RefSeq" id="WP_000643333.1">
    <property type="nucleotide sequence ID" value="NZ_SSZK01000048.1"/>
</dbReference>
<dbReference type="PDB" id="5G5G">
    <property type="method" value="X-ray"/>
    <property type="resolution" value="1.70 A"/>
    <property type="chains" value="B=1-318"/>
</dbReference>
<dbReference type="PDB" id="5G5H">
    <property type="method" value="X-ray"/>
    <property type="resolution" value="2.30 A"/>
    <property type="chains" value="B=1-318"/>
</dbReference>
<dbReference type="PDBsum" id="5G5G"/>
<dbReference type="PDBsum" id="5G5H"/>
<dbReference type="SMR" id="P77324"/>
<dbReference type="BioGRID" id="4259785">
    <property type="interactions" value="126"/>
</dbReference>
<dbReference type="ComplexPortal" id="CPX-4281">
    <property type="entry name" value="PaoABC periplasmic aldehyde oxidoreductase"/>
</dbReference>
<dbReference type="FunCoup" id="P77324">
    <property type="interactions" value="214"/>
</dbReference>
<dbReference type="IntAct" id="P77324">
    <property type="interactions" value="8"/>
</dbReference>
<dbReference type="STRING" id="511145.b0285"/>
<dbReference type="jPOST" id="P77324"/>
<dbReference type="PaxDb" id="511145-b0285"/>
<dbReference type="EnsemblBacteria" id="AAC73388">
    <property type="protein sequence ID" value="AAC73388"/>
    <property type="gene ID" value="b0285"/>
</dbReference>
<dbReference type="GeneID" id="75204628"/>
<dbReference type="GeneID" id="945710"/>
<dbReference type="KEGG" id="ecj:JW0279"/>
<dbReference type="KEGG" id="eco:b0285"/>
<dbReference type="KEGG" id="ecoc:C3026_01390"/>
<dbReference type="KEGG" id="ecoc:C3026_24025"/>
<dbReference type="PATRIC" id="fig|1411691.4.peg.1993"/>
<dbReference type="EchoBASE" id="EB3328"/>
<dbReference type="eggNOG" id="COG1319">
    <property type="taxonomic scope" value="Bacteria"/>
</dbReference>
<dbReference type="HOGENOM" id="CLU_058050_1_0_6"/>
<dbReference type="InParanoid" id="P77324"/>
<dbReference type="OMA" id="GGTHIYR"/>
<dbReference type="OrthoDB" id="9814706at2"/>
<dbReference type="PhylomeDB" id="P77324"/>
<dbReference type="BioCyc" id="EcoCyc:G6156-MONOMER"/>
<dbReference type="BioCyc" id="MetaCyc:G6156-MONOMER"/>
<dbReference type="BRENDA" id="1.17.1.4">
    <property type="organism ID" value="2026"/>
</dbReference>
<dbReference type="PRO" id="PR:P77324"/>
<dbReference type="Proteomes" id="UP000000625">
    <property type="component" value="Chromosome"/>
</dbReference>
<dbReference type="GO" id="GO:0030288">
    <property type="term" value="C:outer membrane-bounded periplasmic space"/>
    <property type="evidence" value="ECO:0000303"/>
    <property type="project" value="EcoCyc"/>
</dbReference>
<dbReference type="GO" id="GO:1990204">
    <property type="term" value="C:oxidoreductase complex"/>
    <property type="evidence" value="ECO:0000353"/>
    <property type="project" value="ComplexPortal"/>
</dbReference>
<dbReference type="GO" id="GO:0042597">
    <property type="term" value="C:periplasmic space"/>
    <property type="evidence" value="ECO:0000303"/>
    <property type="project" value="ComplexPortal"/>
</dbReference>
<dbReference type="GO" id="GO:0051539">
    <property type="term" value="F:4 iron, 4 sulfur cluster binding"/>
    <property type="evidence" value="ECO:0000314"/>
    <property type="project" value="EcoCyc"/>
</dbReference>
<dbReference type="GO" id="GO:0047770">
    <property type="term" value="F:carboxylate reductase activity"/>
    <property type="evidence" value="ECO:0007669"/>
    <property type="project" value="UniProtKB-EC"/>
</dbReference>
<dbReference type="GO" id="GO:0071949">
    <property type="term" value="F:FAD binding"/>
    <property type="evidence" value="ECO:0007669"/>
    <property type="project" value="InterPro"/>
</dbReference>
<dbReference type="GO" id="GO:0050660">
    <property type="term" value="F:flavin adenine dinucleotide binding"/>
    <property type="evidence" value="ECO:0000314"/>
    <property type="project" value="EcoCyc"/>
</dbReference>
<dbReference type="GO" id="GO:0046872">
    <property type="term" value="F:metal ion binding"/>
    <property type="evidence" value="ECO:0007669"/>
    <property type="project" value="UniProtKB-KW"/>
</dbReference>
<dbReference type="GO" id="GO:0016903">
    <property type="term" value="F:oxidoreductase activity, acting on the aldehyde or oxo group of donors"/>
    <property type="evidence" value="ECO:0000314"/>
    <property type="project" value="EcoCyc"/>
</dbReference>
<dbReference type="GO" id="GO:0009056">
    <property type="term" value="P:catabolic process"/>
    <property type="evidence" value="ECO:0000314"/>
    <property type="project" value="ComplexPortal"/>
</dbReference>
<dbReference type="GO" id="GO:0110095">
    <property type="term" value="P:cellular detoxification of aldehyde"/>
    <property type="evidence" value="ECO:0000314"/>
    <property type="project" value="ComplexPortal"/>
</dbReference>
<dbReference type="FunFam" id="3.30.43.10:FF:000013">
    <property type="entry name" value="FAD binding domain in molybdopterin dehydrogenase"/>
    <property type="match status" value="1"/>
</dbReference>
<dbReference type="FunFam" id="3.30.465.10:FF:000029">
    <property type="entry name" value="FAD binding domain in molybdopterin dehydrogenase"/>
    <property type="match status" value="1"/>
</dbReference>
<dbReference type="Gene3D" id="3.30.465.10">
    <property type="match status" value="2"/>
</dbReference>
<dbReference type="Gene3D" id="3.30.390.50">
    <property type="entry name" value="CO dehydrogenase flavoprotein, C-terminal domain"/>
    <property type="match status" value="1"/>
</dbReference>
<dbReference type="Gene3D" id="3.30.43.10">
    <property type="entry name" value="Uridine Diphospho-n-acetylenolpyruvylglucosamine Reductase, domain 2"/>
    <property type="match status" value="1"/>
</dbReference>
<dbReference type="InterPro" id="IPR005107">
    <property type="entry name" value="CO_DH_flav_C"/>
</dbReference>
<dbReference type="InterPro" id="IPR036683">
    <property type="entry name" value="CO_DH_flav_C_dom_sf"/>
</dbReference>
<dbReference type="InterPro" id="IPR051312">
    <property type="entry name" value="Diverse_Substr_Oxidored"/>
</dbReference>
<dbReference type="InterPro" id="IPR016166">
    <property type="entry name" value="FAD-bd_PCMH"/>
</dbReference>
<dbReference type="InterPro" id="IPR036318">
    <property type="entry name" value="FAD-bd_PCMH-like_sf"/>
</dbReference>
<dbReference type="InterPro" id="IPR016167">
    <property type="entry name" value="FAD-bd_PCMH_sub1"/>
</dbReference>
<dbReference type="InterPro" id="IPR016169">
    <property type="entry name" value="FAD-bd_PCMH_sub2"/>
</dbReference>
<dbReference type="InterPro" id="IPR002346">
    <property type="entry name" value="Mopterin_DH_FAD-bd"/>
</dbReference>
<dbReference type="PANTHER" id="PTHR42659:SF5">
    <property type="entry name" value="ALDEHYDE OXIDOREDUCTASE FAD-BINDING SUBUNIT PAOB"/>
    <property type="match status" value="1"/>
</dbReference>
<dbReference type="PANTHER" id="PTHR42659">
    <property type="entry name" value="XANTHINE DEHYDROGENASE SUBUNIT C-RELATED"/>
    <property type="match status" value="1"/>
</dbReference>
<dbReference type="Pfam" id="PF00941">
    <property type="entry name" value="FAD_binding_5"/>
    <property type="match status" value="1"/>
</dbReference>
<dbReference type="SMART" id="SM01092">
    <property type="entry name" value="CO_deh_flav_C"/>
    <property type="match status" value="1"/>
</dbReference>
<dbReference type="SUPFAM" id="SSF55447">
    <property type="entry name" value="CO dehydrogenase flavoprotein C-terminal domain-like"/>
    <property type="match status" value="1"/>
</dbReference>
<dbReference type="SUPFAM" id="SSF56176">
    <property type="entry name" value="FAD-binding/transporter-associated domain-like"/>
    <property type="match status" value="1"/>
</dbReference>
<dbReference type="PROSITE" id="PS51387">
    <property type="entry name" value="FAD_PCMH"/>
    <property type="match status" value="1"/>
</dbReference>
<organism>
    <name type="scientific">Escherichia coli (strain K12)</name>
    <dbReference type="NCBI Taxonomy" id="83333"/>
    <lineage>
        <taxon>Bacteria</taxon>
        <taxon>Pseudomonadati</taxon>
        <taxon>Pseudomonadota</taxon>
        <taxon>Gammaproteobacteria</taxon>
        <taxon>Enterobacterales</taxon>
        <taxon>Enterobacteriaceae</taxon>
        <taxon>Escherichia</taxon>
    </lineage>
</organism>
<evidence type="ECO:0000255" key="1">
    <source>
        <dbReference type="PROSITE-ProRule" id="PRU00718"/>
    </source>
</evidence>
<evidence type="ECO:0000269" key="2">
    <source>
    </source>
</evidence>
<evidence type="ECO:0000269" key="3">
    <source>
    </source>
</evidence>
<evidence type="ECO:0000269" key="4">
    <source>
    </source>
</evidence>
<evidence type="ECO:0000269" key="5">
    <source>
    </source>
</evidence>
<evidence type="ECO:0000303" key="6">
    <source>
    </source>
</evidence>
<evidence type="ECO:0000305" key="7"/>
<evidence type="ECO:0000305" key="8">
    <source>
    </source>
</evidence>
<evidence type="ECO:0007744" key="9">
    <source>
        <dbReference type="PDB" id="5G5G"/>
    </source>
</evidence>
<evidence type="ECO:0007744" key="10">
    <source>
        <dbReference type="PDB" id="5G5H"/>
    </source>
</evidence>
<evidence type="ECO:0007829" key="11">
    <source>
        <dbReference type="PDB" id="5G5G"/>
    </source>
</evidence>
<name>PAOB_ECOLI</name>
<gene>
    <name evidence="6" type="primary">paoB</name>
    <name type="synonym">yagS</name>
    <name type="ordered locus">b0285</name>
    <name type="ordered locus">JW0279</name>
</gene>
<accession>P77324</accession>
<accession>Q2MCD7</accession>
<feature type="chain" id="PRO_0000166094" description="Aldehyde oxidoreductase FAD-binding subunit PaoB">
    <location>
        <begin position="1"/>
        <end position="318"/>
    </location>
</feature>
<feature type="domain" description="FAD-binding PCMH-type" evidence="1">
    <location>
        <begin position="1"/>
        <end position="223"/>
    </location>
</feature>
<feature type="binding site" evidence="5 9 10">
    <location>
        <begin position="26"/>
        <end position="34"/>
    </location>
    <ligand>
        <name>FAD</name>
        <dbReference type="ChEBI" id="CHEBI:57692"/>
    </ligand>
</feature>
<feature type="binding site" evidence="5 9 10">
    <location>
        <position position="108"/>
    </location>
    <ligand>
        <name>FAD</name>
        <dbReference type="ChEBI" id="CHEBI:57692"/>
    </ligand>
</feature>
<feature type="binding site" evidence="5 9 10">
    <location>
        <position position="119"/>
    </location>
    <ligand>
        <name>[4Fe-4S] cluster</name>
        <dbReference type="ChEBI" id="CHEBI:49883"/>
    </ligand>
</feature>
<feature type="binding site" evidence="5 9 10">
    <location>
        <position position="129"/>
    </location>
    <ligand>
        <name>[4Fe-4S] cluster</name>
        <dbReference type="ChEBI" id="CHEBI:49883"/>
    </ligand>
</feature>
<feature type="binding site" evidence="5 9 10">
    <location>
        <position position="138"/>
    </location>
    <ligand>
        <name>[4Fe-4S] cluster</name>
        <dbReference type="ChEBI" id="CHEBI:49883"/>
    </ligand>
</feature>
<feature type="binding site" evidence="5 9 10">
    <location>
        <position position="157"/>
    </location>
    <ligand>
        <name>[4Fe-4S] cluster</name>
        <dbReference type="ChEBI" id="CHEBI:49883"/>
    </ligand>
</feature>
<feature type="binding site" evidence="5 9 10">
    <location>
        <position position="164"/>
    </location>
    <ligand>
        <name>FAD</name>
        <dbReference type="ChEBI" id="CHEBI:57692"/>
    </ligand>
</feature>
<feature type="binding site" evidence="5 9 10">
    <location>
        <position position="213"/>
    </location>
    <ligand>
        <name>FAD</name>
        <dbReference type="ChEBI" id="CHEBI:57692"/>
    </ligand>
</feature>
<feature type="binding site" evidence="5 9 10">
    <location>
        <position position="230"/>
    </location>
    <ligand>
        <name>FAD</name>
        <dbReference type="ChEBI" id="CHEBI:57692"/>
    </ligand>
</feature>
<feature type="strand" evidence="11">
    <location>
        <begin position="5"/>
        <end position="7"/>
    </location>
</feature>
<feature type="helix" evidence="11">
    <location>
        <begin position="12"/>
        <end position="21"/>
    </location>
</feature>
<feature type="strand" evidence="11">
    <location>
        <begin position="25"/>
        <end position="30"/>
    </location>
</feature>
<feature type="helix" evidence="11">
    <location>
        <begin position="34"/>
        <end position="39"/>
    </location>
</feature>
<feature type="strand" evidence="11">
    <location>
        <begin position="46"/>
        <end position="50"/>
    </location>
</feature>
<feature type="strand" evidence="11">
    <location>
        <begin position="59"/>
        <end position="61"/>
    </location>
</feature>
<feature type="strand" evidence="11">
    <location>
        <begin position="65"/>
        <end position="70"/>
    </location>
</feature>
<feature type="helix" evidence="11">
    <location>
        <begin position="75"/>
        <end position="80"/>
    </location>
</feature>
<feature type="helix" evidence="11">
    <location>
        <begin position="82"/>
        <end position="87"/>
    </location>
</feature>
<feature type="helix" evidence="11">
    <location>
        <begin position="89"/>
        <end position="96"/>
    </location>
</feature>
<feature type="helix" evidence="11">
    <location>
        <begin position="101"/>
        <end position="106"/>
    </location>
</feature>
<feature type="helix" evidence="11">
    <location>
        <begin position="109"/>
        <end position="113"/>
    </location>
</feature>
<feature type="helix" evidence="11">
    <location>
        <begin position="120"/>
        <end position="123"/>
    </location>
</feature>
<feature type="turn" evidence="11">
    <location>
        <begin position="130"/>
        <end position="132"/>
    </location>
</feature>
<feature type="turn" evidence="11">
    <location>
        <begin position="140"/>
        <end position="142"/>
    </location>
</feature>
<feature type="strand" evidence="11">
    <location>
        <begin position="150"/>
        <end position="152"/>
    </location>
</feature>
<feature type="helix" evidence="11">
    <location>
        <begin position="165"/>
        <end position="171"/>
    </location>
</feature>
<feature type="strand" evidence="11">
    <location>
        <begin position="175"/>
        <end position="179"/>
    </location>
</feature>
<feature type="strand" evidence="11">
    <location>
        <begin position="185"/>
        <end position="189"/>
    </location>
</feature>
<feature type="helix" evidence="11">
    <location>
        <begin position="190"/>
        <end position="192"/>
    </location>
</feature>
<feature type="strand" evidence="11">
    <location>
        <begin position="212"/>
        <end position="218"/>
    </location>
</feature>
<feature type="strand" evidence="11">
    <location>
        <begin position="224"/>
        <end position="231"/>
    </location>
</feature>
<feature type="strand" evidence="11">
    <location>
        <begin position="233"/>
        <end position="238"/>
    </location>
</feature>
<feature type="strand" evidence="11">
    <location>
        <begin position="241"/>
        <end position="248"/>
    </location>
</feature>
<feature type="strand" evidence="11">
    <location>
        <begin position="254"/>
        <end position="264"/>
    </location>
</feature>
<feature type="helix" evidence="11">
    <location>
        <begin position="269"/>
        <end position="272"/>
    </location>
</feature>
<feature type="helix" evidence="11">
    <location>
        <begin position="273"/>
        <end position="277"/>
    </location>
</feature>
<feature type="helix" evidence="11">
    <location>
        <begin position="279"/>
        <end position="286"/>
    </location>
</feature>
<feature type="turn" evidence="11">
    <location>
        <begin position="287"/>
        <end position="289"/>
    </location>
</feature>
<feature type="turn" evidence="11">
    <location>
        <begin position="294"/>
        <end position="297"/>
    </location>
</feature>
<feature type="helix" evidence="11">
    <location>
        <begin position="298"/>
        <end position="315"/>
    </location>
</feature>
<comment type="function">
    <text evidence="2">Oxidizes aldehydes to the corresponding carboxylic acids with a preference for aromatic aldehydes. It might play a role in the detoxification of aldehydes to avoid cell damage.</text>
</comment>
<comment type="catalytic activity">
    <reaction evidence="2 3">
        <text>an aldehyde + A + H2O = a carboxylate + AH2 + H(+)</text>
        <dbReference type="Rhea" id="RHEA:56856"/>
        <dbReference type="ChEBI" id="CHEBI:13193"/>
        <dbReference type="ChEBI" id="CHEBI:15377"/>
        <dbReference type="ChEBI" id="CHEBI:15378"/>
        <dbReference type="ChEBI" id="CHEBI:17478"/>
        <dbReference type="ChEBI" id="CHEBI:17499"/>
        <dbReference type="ChEBI" id="CHEBI:29067"/>
        <dbReference type="EC" id="1.2.99.6"/>
    </reaction>
</comment>
<comment type="cofactor">
    <cofactor evidence="2 5">
        <name>FAD</name>
        <dbReference type="ChEBI" id="CHEBI:57692"/>
    </cofactor>
</comment>
<comment type="cofactor">
    <cofactor evidence="5">
        <name>[4Fe-4S] cluster</name>
        <dbReference type="ChEBI" id="CHEBI:49883"/>
    </cofactor>
</comment>
<comment type="activity regulation">
    <text evidence="2">The complex requires PaoD for activity.</text>
</comment>
<comment type="subunit">
    <text evidence="2 4 5">Heterotrimer composed of PaoA, PaoB and PaoC.</text>
</comment>
<comment type="subcellular location">
    <subcellularLocation>
        <location evidence="8">Periplasm</location>
    </subcellularLocation>
</comment>